<proteinExistence type="inferred from homology"/>
<protein>
    <recommendedName>
        <fullName evidence="1">Recombination protein RecR</fullName>
    </recommendedName>
</protein>
<reference key="1">
    <citation type="submission" date="2008-08" db="EMBL/GenBank/DDBJ databases">
        <title>Complete sequence of Acidithiobacillus ferrooxidans ATCC 53993.</title>
        <authorList>
            <person name="Lucas S."/>
            <person name="Copeland A."/>
            <person name="Lapidus A."/>
            <person name="Glavina del Rio T."/>
            <person name="Dalin E."/>
            <person name="Tice H."/>
            <person name="Bruce D."/>
            <person name="Goodwin L."/>
            <person name="Pitluck S."/>
            <person name="Sims D."/>
            <person name="Brettin T."/>
            <person name="Detter J.C."/>
            <person name="Han C."/>
            <person name="Kuske C.R."/>
            <person name="Larimer F."/>
            <person name="Land M."/>
            <person name="Hauser L."/>
            <person name="Kyrpides N."/>
            <person name="Lykidis A."/>
            <person name="Borole A.P."/>
        </authorList>
    </citation>
    <scope>NUCLEOTIDE SEQUENCE [LARGE SCALE GENOMIC DNA]</scope>
    <source>
        <strain>ATCC 53993 / BNL-5-31</strain>
    </source>
</reference>
<keyword id="KW-0227">DNA damage</keyword>
<keyword id="KW-0233">DNA recombination</keyword>
<keyword id="KW-0234">DNA repair</keyword>
<keyword id="KW-0479">Metal-binding</keyword>
<keyword id="KW-0862">Zinc</keyword>
<keyword id="KW-0863">Zinc-finger</keyword>
<accession>B5EJE1</accession>
<name>RECR_ACIF5</name>
<gene>
    <name evidence="1" type="primary">recR</name>
    <name type="ordered locus">Lferr_1593</name>
</gene>
<feature type="chain" id="PRO_1000089701" description="Recombination protein RecR">
    <location>
        <begin position="1"/>
        <end position="199"/>
    </location>
</feature>
<feature type="domain" description="Toprim" evidence="1">
    <location>
        <begin position="80"/>
        <end position="174"/>
    </location>
</feature>
<feature type="zinc finger region" description="C4-type" evidence="1">
    <location>
        <begin position="57"/>
        <end position="72"/>
    </location>
</feature>
<dbReference type="EMBL" id="CP001132">
    <property type="protein sequence ID" value="ACH83815.1"/>
    <property type="molecule type" value="Genomic_DNA"/>
</dbReference>
<dbReference type="RefSeq" id="WP_012536838.1">
    <property type="nucleotide sequence ID" value="NC_011206.1"/>
</dbReference>
<dbReference type="SMR" id="B5EJE1"/>
<dbReference type="GeneID" id="65281074"/>
<dbReference type="KEGG" id="afe:Lferr_1593"/>
<dbReference type="eggNOG" id="COG0353">
    <property type="taxonomic scope" value="Bacteria"/>
</dbReference>
<dbReference type="HOGENOM" id="CLU_060739_1_0_6"/>
<dbReference type="GO" id="GO:0003677">
    <property type="term" value="F:DNA binding"/>
    <property type="evidence" value="ECO:0007669"/>
    <property type="project" value="UniProtKB-UniRule"/>
</dbReference>
<dbReference type="GO" id="GO:0008270">
    <property type="term" value="F:zinc ion binding"/>
    <property type="evidence" value="ECO:0007669"/>
    <property type="project" value="UniProtKB-KW"/>
</dbReference>
<dbReference type="GO" id="GO:0006310">
    <property type="term" value="P:DNA recombination"/>
    <property type="evidence" value="ECO:0007669"/>
    <property type="project" value="UniProtKB-UniRule"/>
</dbReference>
<dbReference type="GO" id="GO:0006281">
    <property type="term" value="P:DNA repair"/>
    <property type="evidence" value="ECO:0007669"/>
    <property type="project" value="UniProtKB-UniRule"/>
</dbReference>
<dbReference type="CDD" id="cd01025">
    <property type="entry name" value="TOPRIM_recR"/>
    <property type="match status" value="1"/>
</dbReference>
<dbReference type="Gene3D" id="3.40.1360.10">
    <property type="match status" value="1"/>
</dbReference>
<dbReference type="Gene3D" id="6.10.250.240">
    <property type="match status" value="1"/>
</dbReference>
<dbReference type="Gene3D" id="1.10.8.420">
    <property type="entry name" value="RecR Domain 1"/>
    <property type="match status" value="1"/>
</dbReference>
<dbReference type="HAMAP" id="MF_00017">
    <property type="entry name" value="RecR"/>
    <property type="match status" value="1"/>
</dbReference>
<dbReference type="InterPro" id="IPR000093">
    <property type="entry name" value="DNA_Rcmb_RecR"/>
</dbReference>
<dbReference type="InterPro" id="IPR023627">
    <property type="entry name" value="Rcmb_RecR"/>
</dbReference>
<dbReference type="InterPro" id="IPR015967">
    <property type="entry name" value="Rcmb_RecR_Znf"/>
</dbReference>
<dbReference type="InterPro" id="IPR006171">
    <property type="entry name" value="TOPRIM_dom"/>
</dbReference>
<dbReference type="InterPro" id="IPR034137">
    <property type="entry name" value="TOPRIM_RecR"/>
</dbReference>
<dbReference type="NCBIfam" id="TIGR00615">
    <property type="entry name" value="recR"/>
    <property type="match status" value="1"/>
</dbReference>
<dbReference type="PANTHER" id="PTHR30446">
    <property type="entry name" value="RECOMBINATION PROTEIN RECR"/>
    <property type="match status" value="1"/>
</dbReference>
<dbReference type="PANTHER" id="PTHR30446:SF0">
    <property type="entry name" value="RECOMBINATION PROTEIN RECR"/>
    <property type="match status" value="1"/>
</dbReference>
<dbReference type="Pfam" id="PF21175">
    <property type="entry name" value="RecR_C"/>
    <property type="match status" value="1"/>
</dbReference>
<dbReference type="Pfam" id="PF21176">
    <property type="entry name" value="RecR_HhH"/>
    <property type="match status" value="1"/>
</dbReference>
<dbReference type="Pfam" id="PF02132">
    <property type="entry name" value="RecR_ZnF"/>
    <property type="match status" value="1"/>
</dbReference>
<dbReference type="Pfam" id="PF13662">
    <property type="entry name" value="Toprim_4"/>
    <property type="match status" value="1"/>
</dbReference>
<dbReference type="SMART" id="SM00493">
    <property type="entry name" value="TOPRIM"/>
    <property type="match status" value="1"/>
</dbReference>
<dbReference type="SUPFAM" id="SSF111304">
    <property type="entry name" value="Recombination protein RecR"/>
    <property type="match status" value="1"/>
</dbReference>
<dbReference type="PROSITE" id="PS01300">
    <property type="entry name" value="RECR"/>
    <property type="match status" value="1"/>
</dbReference>
<dbReference type="PROSITE" id="PS50880">
    <property type="entry name" value="TOPRIM"/>
    <property type="match status" value="1"/>
</dbReference>
<sequence>MADVPSMDALVALLRRLPGIGPRSAQRISYELLVRKRDLMPQLAAAFQQAHAVVRFCERCNNLSEAPLCAVCRSEHRDRSILCVVESPADLRAIEDTGVFVGEFFVLMGHLSPLDGIGPEALHIDRLSARLGETDLQEVIFATNPTLEGEATAQFLAGLVPDGVTISRIARGVPVGGELEYVDRSTLGRALHGRRLLDE</sequence>
<comment type="function">
    <text evidence="1">May play a role in DNA repair. It seems to be involved in an RecBC-independent recombinational process of DNA repair. It may act with RecF and RecO.</text>
</comment>
<comment type="similarity">
    <text evidence="1">Belongs to the RecR family.</text>
</comment>
<evidence type="ECO:0000255" key="1">
    <source>
        <dbReference type="HAMAP-Rule" id="MF_00017"/>
    </source>
</evidence>
<organism>
    <name type="scientific">Acidithiobacillus ferrooxidans (strain ATCC 53993 / BNL-5-31)</name>
    <name type="common">Leptospirillum ferrooxidans (ATCC 53993)</name>
    <dbReference type="NCBI Taxonomy" id="380394"/>
    <lineage>
        <taxon>Bacteria</taxon>
        <taxon>Pseudomonadati</taxon>
        <taxon>Pseudomonadota</taxon>
        <taxon>Acidithiobacillia</taxon>
        <taxon>Acidithiobacillales</taxon>
        <taxon>Acidithiobacillaceae</taxon>
        <taxon>Acidithiobacillus</taxon>
    </lineage>
</organism>